<comment type="function">
    <text evidence="1 9 13 14 15 16">Key regulator of RAB11-dependent vesicular trafficking during neurite extension through polarized membrane transport (PubMed:17082457). Promotes axonal elongation and contributes to the establishment of neuronal cell polarity (By similarity). Involved in nerve growth factor-induced neurite formation in VAPA-dependent manner (PubMed:19289470). Contributes to both the formation and stabilization of the tubular ER network (PubMed:24668814). Involved in ER morphogenesis by regulating the sheet-to-tubule balance and possibly the density of tubule interconnections (PubMed:23969831). Acts as an adapter protein and facilitates the interaction of KIF5A with VAPA, VAPB, SURF4, RAB11A, RAB11B and RTN3 and the ZFYVE27-KIF5A complex contributes to the transport of these proteins in neurons. Can induce formation of neurite-like membrane protrusions in non-neuronal cells in a KIF5A/B-dependent manner (PubMed:21976701).</text>
</comment>
<comment type="subunit">
    <text evidence="1 8 9 11 13 14 15 16">Can form homooligomers (monomers, dimers and tetramers) (PubMed:23969831). Interacts with RAB11A (GDP-bound form); regulates RAB11A (PubMed:17082457). Interacts with FKBP8; may negatively regulate ZFYVE27 phosphorylation (PubMed:17082457, PubMed:18459960). Interacts with VAPA (via MSP domain); may regulate ZFYVE27 retention in the endoplasmic reticulum and its function in cell projections formation (PubMed:19289470, PubMed:21976701). Interacts with VAPB (via MSP domain) (PubMed:19289470, PubMed:21976701). Interacts with REEP1, REEP5 and ATL1 (PubMed:23969831, PubMed:24668814). Interacts with ATL2, ATL3 and SPAST (PubMed:23969831). Interacts with KIF5A and RTN3 (PubMed:21976701). Interacts with RAB11B (GDP-bound form), SURF4, KIF5B and KIF5C (By similarity).</text>
</comment>
<comment type="interaction">
    <interactant intactId="EBI-3892947">
        <id>Q5T4F4</id>
    </interactant>
    <interactant intactId="EBI-2410266">
        <id>Q8WXF7</id>
        <label>ATL1</label>
    </interactant>
    <organismsDiffer>false</organismsDiffer>
    <experiments>6</experiments>
</comment>
<comment type="interaction">
    <interactant intactId="EBI-3892947">
        <id>Q5T4F4</id>
    </interactant>
    <interactant intactId="EBI-2410430">
        <id>Q8NHH9</id>
        <label>ATL2</label>
    </interactant>
    <organismsDiffer>false</organismsDiffer>
    <experiments>2</experiments>
</comment>
<comment type="interaction">
    <interactant intactId="EBI-3892947">
        <id>Q5T4F4</id>
    </interactant>
    <interactant intactId="EBI-6165882">
        <id>Q6DD88</id>
        <label>ATL3</label>
    </interactant>
    <organismsDiffer>false</organismsDiffer>
    <experiments>3</experiments>
</comment>
<comment type="interaction">
    <interactant intactId="EBI-3892947">
        <id>Q5T4F4</id>
    </interactant>
    <interactant intactId="EBI-724839">
        <id>Q14318</id>
        <label>FKBP8</label>
    </interactant>
    <organismsDiffer>false</organismsDiffer>
    <experiments>4</experiments>
</comment>
<comment type="interaction">
    <interactant intactId="EBI-3892947">
        <id>Q5T4F4</id>
    </interactant>
    <interactant intactId="EBI-11991950">
        <id>Q8WWP7</id>
        <label>GIMAP1</label>
    </interactant>
    <organismsDiffer>false</organismsDiffer>
    <experiments>3</experiments>
</comment>
<comment type="interaction">
    <interactant intactId="EBI-3892947">
        <id>Q5T4F4</id>
    </interactant>
    <interactant intactId="EBI-6166686">
        <id>Q96F15</id>
        <label>GIMAP5</label>
    </interactant>
    <organismsDiffer>false</organismsDiffer>
    <experiments>3</experiments>
</comment>
<comment type="interaction">
    <interactant intactId="EBI-3892947">
        <id>Q5T4F4</id>
    </interactant>
    <interactant intactId="EBI-725665">
        <id>Q9Y5U9</id>
        <label>IER3IP1</label>
    </interactant>
    <organismsDiffer>false</organismsDiffer>
    <experiments>3</experiments>
</comment>
<comment type="interaction">
    <interactant intactId="EBI-3892947">
        <id>Q5T4F4</id>
    </interactant>
    <interactant intactId="EBI-1054848">
        <id>Q9P0S3</id>
        <label>ORMDL1</label>
    </interactant>
    <organismsDiffer>false</organismsDiffer>
    <experiments>3</experiments>
</comment>
<comment type="interaction">
    <interactant intactId="EBI-3892947">
        <id>Q5T4F4</id>
    </interactant>
    <interactant intactId="EBI-12853910">
        <id>Q7RTS5</id>
        <label>OTOP3</label>
    </interactant>
    <organismsDiffer>false</organismsDiffer>
    <experiments>3</experiments>
</comment>
<comment type="interaction">
    <interactant intactId="EBI-3892947">
        <id>Q5T4F4</id>
    </interactant>
    <interactant intactId="EBI-2820617">
        <id>Q8N4L2</id>
        <label>PIP4P2</label>
    </interactant>
    <organismsDiffer>false</organismsDiffer>
    <experiments>3</experiments>
</comment>
<comment type="interaction">
    <interactant intactId="EBI-3892947">
        <id>Q5T4F4</id>
    </interactant>
    <interactant intactId="EBI-745098">
        <id>P62491</id>
        <label>RAB11A</label>
    </interactant>
    <organismsDiffer>false</organismsDiffer>
    <experiments>4</experiments>
</comment>
<comment type="interaction">
    <interactant intactId="EBI-3892947">
        <id>Q5T4F4</id>
    </interactant>
    <interactant intactId="EBI-1644241">
        <id>Q9H902</id>
        <label>REEP1</label>
    </interactant>
    <organismsDiffer>false</organismsDiffer>
    <experiments>2</experiments>
</comment>
<comment type="interaction">
    <interactant intactId="EBI-3892947">
        <id>Q5T4F4</id>
    </interactant>
    <interactant intactId="EBI-1549827">
        <id>Q00765</id>
        <label>REEP5</label>
    </interactant>
    <organismsDiffer>false</organismsDiffer>
    <experiments>4</experiments>
</comment>
<comment type="interaction">
    <interactant intactId="EBI-3892947">
        <id>Q5T4F4</id>
    </interactant>
    <interactant intactId="EBI-3917235">
        <id>Q9NTJ5</id>
        <label>SACM1L</label>
    </interactant>
    <organismsDiffer>false</organismsDiffer>
    <experiments>3</experiments>
</comment>
<comment type="interaction">
    <interactant intactId="EBI-3892947">
        <id>Q5T4F4</id>
    </interactant>
    <interactant intactId="EBI-8652744">
        <id>Q96IW7</id>
        <label>SEC22A</label>
    </interactant>
    <organismsDiffer>false</organismsDiffer>
    <experiments>3</experiments>
</comment>
<comment type="interaction">
    <interactant intactId="EBI-3892947">
        <id>Q5T4F4</id>
    </interactant>
    <interactant intactId="EBI-10262251">
        <id>Q8IWU4</id>
        <label>SLC30A8</label>
    </interactant>
    <organismsDiffer>false</organismsDiffer>
    <experiments>3</experiments>
</comment>
<comment type="interaction">
    <interactant intactId="EBI-3892947">
        <id>Q5T4F4</id>
    </interactant>
    <interactant intactId="EBI-3907610">
        <id>Q8N2U9</id>
        <label>SLC66A2</label>
    </interactant>
    <organismsDiffer>false</organismsDiffer>
    <experiments>3</experiments>
</comment>
<comment type="interaction">
    <interactant intactId="EBI-3892947">
        <id>Q5T4F4</id>
    </interactant>
    <interactant intactId="EBI-1222832">
        <id>Q9UBP0</id>
        <label>SPAST</label>
    </interactant>
    <organismsDiffer>false</organismsDiffer>
    <experiments>3</experiments>
</comment>
<comment type="interaction">
    <interactant intactId="EBI-3892947">
        <id>Q5T4F4</id>
    </interactant>
    <interactant intactId="EBI-3221827">
        <id>O15400</id>
        <label>STX7</label>
    </interactant>
    <organismsDiffer>false</organismsDiffer>
    <experiments>3</experiments>
</comment>
<comment type="interaction">
    <interactant intactId="EBI-3892947">
        <id>Q5T4F4</id>
    </interactant>
    <interactant intactId="EBI-10694905">
        <id>Q5BJH2-2</id>
        <label>TMEM128</label>
    </interactant>
    <organismsDiffer>false</organismsDiffer>
    <experiments>3</experiments>
</comment>
<comment type="interaction">
    <interactant intactId="EBI-3892947">
        <id>Q5T4F4</id>
    </interactant>
    <interactant intactId="EBI-2339195">
        <id>Q9P0S9</id>
        <label>TMEM14C</label>
    </interactant>
    <organismsDiffer>false</organismsDiffer>
    <experiments>3</experiments>
</comment>
<comment type="interaction">
    <interactant intactId="EBI-3892947">
        <id>Q5T4F4</id>
    </interactant>
    <interactant intactId="EBI-12887458">
        <id>Q9BU79</id>
        <label>TMEM243</label>
    </interactant>
    <organismsDiffer>false</organismsDiffer>
    <experiments>3</experiments>
</comment>
<comment type="interaction">
    <interactant intactId="EBI-3892947">
        <id>Q5T4F4</id>
    </interactant>
    <interactant intactId="EBI-6656213">
        <id>Q6PI78</id>
        <label>TMEM65</label>
    </interactant>
    <organismsDiffer>false</organismsDiffer>
    <experiments>3</experiments>
</comment>
<comment type="interaction">
    <interactant intactId="EBI-3892947">
        <id>Q5T4F4</id>
    </interactant>
    <interactant intactId="EBI-3914288">
        <id>O60636</id>
        <label>TSPAN2</label>
    </interactant>
    <organismsDiffer>false</organismsDiffer>
    <experiments>3</experiments>
</comment>
<comment type="interaction">
    <interactant intactId="EBI-3892947">
        <id>Q5T4F4</id>
    </interactant>
    <interactant intactId="EBI-1059156">
        <id>Q9P0L0</id>
        <label>VAPA</label>
    </interactant>
    <organismsDiffer>false</organismsDiffer>
    <experiments>7</experiments>
</comment>
<comment type="interaction">
    <interactant intactId="EBI-3892947">
        <id>Q5T4F4</id>
    </interactant>
    <interactant intactId="EBI-1188298">
        <id>O95292</id>
        <label>VAPB</label>
    </interactant>
    <organismsDiffer>false</organismsDiffer>
    <experiments>2</experiments>
</comment>
<comment type="interaction">
    <interactant intactId="EBI-3892947">
        <id>Q5T4F4</id>
    </interactant>
    <interactant intactId="EBI-2799703">
        <id>O95070</id>
        <label>YIF1A</label>
    </interactant>
    <organismsDiffer>false</organismsDiffer>
    <experiments>3</experiments>
</comment>
<comment type="interaction">
    <interactant intactId="EBI-3892947">
        <id>Q5T4F4</id>
    </interactant>
    <interactant intactId="EBI-3892947">
        <id>Q5T4F4</id>
        <label>ZFYVE27</label>
    </interactant>
    <organismsDiffer>false</organismsDiffer>
    <experiments>2</experiments>
</comment>
<comment type="interaction">
    <interactant intactId="EBI-16152863">
        <id>Q5T4F4-1</id>
    </interactant>
    <interactant intactId="EBI-7991906">
        <id>P18067</id>
        <label>RAB7A</label>
    </interactant>
    <organismsDiffer>true</organismsDiffer>
    <experiments>2</experiments>
</comment>
<comment type="subcellular location">
    <subcellularLocation>
        <location evidence="2">Recycling endosome membrane</location>
        <topology evidence="3">Multi-pass membrane protein</topology>
    </subcellularLocation>
    <subcellularLocation>
        <location evidence="13 15 16">Endoplasmic reticulum membrane</location>
        <topology evidence="15">Multi-pass membrane protein</topology>
    </subcellularLocation>
    <subcellularLocation>
        <location evidence="1">Cell projection</location>
        <location evidence="1">Growth cone membrane</location>
        <topology evidence="3">Multi-pass membrane protein</topology>
    </subcellularLocation>
    <text evidence="1 15 16">Localizes at both dendrites and axons (By similarity). Localizes to endoplasmic reticulum tubular network.</text>
</comment>
<comment type="alternative products">
    <event type="alternative splicing"/>
    <isoform>
        <id>Q5T4F4-1</id>
        <name>1</name>
        <sequence type="displayed"/>
    </isoform>
    <isoform>
        <id>Q5T4F4-2</id>
        <name>2</name>
        <sequence type="described" ref="VSP_019754"/>
    </isoform>
    <isoform>
        <id>Q5T4F4-3</id>
        <name>3</name>
        <sequence type="described" ref="VSP_019753"/>
    </isoform>
    <isoform>
        <id>Q5T4F4-4</id>
        <name>4</name>
        <sequence type="described" ref="VSP_019751 VSP_019753 VSP_019754 VSP_019755 VSP_019756"/>
    </isoform>
    <isoform>
        <id>Q5T4F4-5</id>
        <name>5</name>
        <sequence type="described" ref="VSP_019752 VSP_019754"/>
    </isoform>
    <isoform>
        <id>Q5T4F4-6</id>
        <name>6</name>
        <sequence type="described" ref="VSP_045266 VSP_019754"/>
    </isoform>
    <isoform>
        <id>Q5T4F4-7</id>
        <name>7</name>
        <sequence type="described" ref="VSP_045265 VSP_019753 VSP_019754"/>
    </isoform>
    <isoform>
        <id>Q5T4F4-8</id>
        <name>8</name>
        <sequence type="described" ref="VSP_046051 VSP_019754"/>
    </isoform>
</comment>
<comment type="PTM">
    <text evidence="9">Phosphorylated. Phosphorylation is induced by NGF through the MAPK/ERK pathway and modulates interaction with RAB11A.</text>
</comment>
<comment type="sequence caution" evidence="20">
    <conflict type="erroneous initiation">
        <sequence resource="EMBL-CDS" id="CAD38913"/>
    </conflict>
    <text>Truncated N-terminus.</text>
</comment>
<protein>
    <recommendedName>
        <fullName>Protrudin</fullName>
    </recommendedName>
    <alternativeName>
        <fullName evidence="19">Spastic paraplegia 33 protein</fullName>
    </alternativeName>
    <alternativeName>
        <fullName>Zinc finger FYVE domain-containing protein 27</fullName>
    </alternativeName>
</protein>
<feature type="chain" id="PRO_0000245601" description="Protrudin">
    <location>
        <begin position="1"/>
        <end position="411"/>
    </location>
</feature>
<feature type="topological domain" description="Cytoplasmic" evidence="15">
    <location>
        <begin position="1"/>
        <end position="66"/>
    </location>
</feature>
<feature type="transmembrane region" description="Helical" evidence="3">
    <location>
        <begin position="67"/>
        <end position="87"/>
    </location>
</feature>
<feature type="topological domain" description="Lumenal" evidence="15">
    <location>
        <position position="88"/>
    </location>
</feature>
<feature type="transmembrane region" description="Helical" evidence="3">
    <location>
        <begin position="89"/>
        <end position="109"/>
    </location>
</feature>
<feature type="topological domain" description="Cytoplasmic" evidence="15">
    <location>
        <begin position="110"/>
        <end position="187"/>
    </location>
</feature>
<feature type="intramembrane region" description="Helical" evidence="3">
    <location>
        <begin position="188"/>
        <end position="208"/>
    </location>
</feature>
<feature type="topological domain" description="Cytoplasmic" evidence="15">
    <location>
        <begin position="209"/>
        <end position="411"/>
    </location>
</feature>
<feature type="zinc finger region" description="FYVE-type" evidence="4">
    <location>
        <begin position="344"/>
        <end position="410"/>
    </location>
</feature>
<feature type="region of interest" description="Sufficient for localization to endoplasmic reticulum tubular network and for interactions with REEP1, REEP5, ATL1, ATL2, ATL3 and SPAST" evidence="15 16">
    <location>
        <begin position="1"/>
        <end position="205"/>
    </location>
</feature>
<feature type="region of interest" description="Sufficient for homooligomerization" evidence="15">
    <location>
        <begin position="1"/>
        <end position="92"/>
    </location>
</feature>
<feature type="region of interest" description="Disordered" evidence="5">
    <location>
        <begin position="1"/>
        <end position="27"/>
    </location>
</feature>
<feature type="region of interest" description="Necessary for interaction with RAB11A and function in neurite outgrowth" evidence="9">
    <location>
        <begin position="51"/>
        <end position="64"/>
    </location>
</feature>
<feature type="region of interest" description="Disordered" evidence="5">
    <location>
        <begin position="234"/>
        <end position="286"/>
    </location>
</feature>
<feature type="region of interest" description="Necessary for interaction with KIF5A" evidence="14">
    <location>
        <begin position="271"/>
        <end position="361"/>
    </location>
</feature>
<feature type="region of interest" description="Necessary for interaction with VAPA and function in cell projections formation">
    <location>
        <begin position="286"/>
        <end position="292"/>
    </location>
</feature>
<feature type="compositionally biased region" description="Acidic residues" evidence="5">
    <location>
        <begin position="276"/>
        <end position="286"/>
    </location>
</feature>
<feature type="binding site" evidence="4">
    <location>
        <position position="350"/>
    </location>
    <ligand>
        <name>Zn(2+)</name>
        <dbReference type="ChEBI" id="CHEBI:29105"/>
        <label>1</label>
    </ligand>
</feature>
<feature type="binding site" evidence="4">
    <location>
        <position position="353"/>
    </location>
    <ligand>
        <name>Zn(2+)</name>
        <dbReference type="ChEBI" id="CHEBI:29105"/>
        <label>1</label>
    </ligand>
</feature>
<feature type="binding site" evidence="4">
    <location>
        <position position="366"/>
    </location>
    <ligand>
        <name>Zn(2+)</name>
        <dbReference type="ChEBI" id="CHEBI:29105"/>
        <label>2</label>
    </ligand>
</feature>
<feature type="binding site" evidence="4">
    <location>
        <position position="369"/>
    </location>
    <ligand>
        <name>Zn(2+)</name>
        <dbReference type="ChEBI" id="CHEBI:29105"/>
        <label>2</label>
    </ligand>
</feature>
<feature type="binding site" evidence="4">
    <location>
        <position position="374"/>
    </location>
    <ligand>
        <name>Zn(2+)</name>
        <dbReference type="ChEBI" id="CHEBI:29105"/>
        <label>1</label>
    </ligand>
</feature>
<feature type="binding site" evidence="4">
    <location>
        <position position="377"/>
    </location>
    <ligand>
        <name>Zn(2+)</name>
        <dbReference type="ChEBI" id="CHEBI:29105"/>
        <label>1</label>
    </ligand>
</feature>
<feature type="binding site" evidence="4">
    <location>
        <position position="402"/>
    </location>
    <ligand>
        <name>Zn(2+)</name>
        <dbReference type="ChEBI" id="CHEBI:29105"/>
        <label>2</label>
    </ligand>
</feature>
<feature type="binding site" evidence="4">
    <location>
        <position position="405"/>
    </location>
    <ligand>
        <name>Zn(2+)</name>
        <dbReference type="ChEBI" id="CHEBI:29105"/>
        <label>2</label>
    </ligand>
</feature>
<feature type="splice variant" id="VSP_045265" description="In isoform 7." evidence="17">
    <location>
        <begin position="1"/>
        <end position="98"/>
    </location>
</feature>
<feature type="splice variant" id="VSP_019751" description="In isoform 4." evidence="17">
    <location>
        <begin position="1"/>
        <end position="68"/>
    </location>
</feature>
<feature type="splice variant" id="VSP_046051" description="In isoform 8." evidence="17">
    <location>
        <begin position="58"/>
        <end position="89"/>
    </location>
</feature>
<feature type="splice variant" id="VSP_019752" description="In isoform 5." evidence="17">
    <original>RWQMPLCSLLTCLGLNVLFLTLNEGAWYSVGALMISVPALLGYLQEVCRARLPDSELMRRKYHSVRQEDLQRGRLSRPEAVAEVKSF</original>
    <variation>S</variation>
    <location>
        <begin position="66"/>
        <end position="152"/>
    </location>
</feature>
<feature type="splice variant" id="VSP_045266" description="In isoform 6." evidence="17">
    <location>
        <begin position="67"/>
        <end position="184"/>
    </location>
</feature>
<feature type="splice variant" id="VSP_019753" description="In isoform 3, isoform 4 and isoform 7." evidence="17 18">
    <original>E</original>
    <variation>ESLSSQ</variation>
    <location>
        <position position="268"/>
    </location>
</feature>
<feature type="splice variant" id="VSP_019754" description="In isoform 2, isoform 4, isoform 5, isoform 6, isoform 7 and isoform 8." evidence="17">
    <location>
        <begin position="294"/>
        <end position="300"/>
    </location>
</feature>
<feature type="splice variant" id="VSP_019755" description="In isoform 4." evidence="17">
    <original>NCTGCSAT</original>
    <variation>VTGAGSS</variation>
    <location>
        <begin position="349"/>
        <end position="356"/>
    </location>
</feature>
<feature type="splice variant" id="VSP_019756" description="In isoform 4." evidence="17">
    <location>
        <begin position="357"/>
        <end position="411"/>
    </location>
</feature>
<feature type="sequence variant" id="VAR_027002" description="In dbSNP:rs17108378.">
    <original>V</original>
    <variation>I</variation>
    <location>
        <position position="82"/>
    </location>
</feature>
<feature type="sequence variant" id="VAR_027003" description="In dbSNP:rs10882993." evidence="6 7 10">
    <original>G</original>
    <variation>V</variation>
    <location>
        <position position="138"/>
    </location>
</feature>
<feature type="sequence variant" id="VAR_027269" description="No effect on its function in the regulation of ER morphology and stability; no effect on its localization to ER but according to PubMed:16826525 an aberrant subcellular localization to cell membrane seen; altered interaction with SPAST; increased susceptibility to ER stress; no effect on its interaction with REEP1, REEP5 and ATL1; increased protein stability; dbSNP:rs35077384." evidence="8 12 15 16">
    <original>G</original>
    <variation>V</variation>
    <location>
        <position position="191"/>
    </location>
</feature>
<feature type="mutagenesis site" description="Alters interaction with RAB11A; when associated with A-49." evidence="9">
    <original>L</original>
    <variation>A</variation>
    <location>
        <position position="13"/>
    </location>
</feature>
<feature type="mutagenesis site" description="Alters interaction with RAB11A; when associated with A-13." evidence="9">
    <original>I</original>
    <variation>A</variation>
    <location>
        <position position="49"/>
    </location>
</feature>
<feature type="mutagenesis site" description="Loss of interaction with VAPA and loss of function in cell projections formation." evidence="13">
    <original>D</original>
    <variation>A</variation>
    <location>
        <position position="289"/>
    </location>
</feature>
<feature type="sequence conflict" description="In Ref. 3; AAH30621." evidence="20" ref="3">
    <original>Y</original>
    <variation>N</variation>
    <location>
        <position position="50"/>
    </location>
</feature>
<feature type="sequence conflict" description="In Ref. 1; BAC11260." evidence="20" ref="1">
    <original>E</original>
    <variation>G</variation>
    <location>
        <position position="218"/>
    </location>
</feature>
<feature type="sequence conflict" description="In Ref. 1; BAH13112." evidence="20" ref="1">
    <original>V</original>
    <variation>F</variation>
    <location>
        <position position="222"/>
    </location>
</feature>
<feature type="sequence conflict" description="In Ref. 1; BAH13112." evidence="20" ref="1">
    <original>K</original>
    <variation>R</variation>
    <location>
        <position position="340"/>
    </location>
</feature>
<feature type="sequence conflict" description="In Ref. 1; BAH13112." evidence="20" ref="1">
    <original>M</original>
    <variation>A</variation>
    <location>
        <position position="387"/>
    </location>
</feature>
<feature type="strand" evidence="21">
    <location>
        <begin position="351"/>
        <end position="353"/>
    </location>
</feature>
<feature type="strand" evidence="21">
    <location>
        <begin position="359"/>
        <end position="361"/>
    </location>
</feature>
<feature type="strand" evidence="21">
    <location>
        <begin position="367"/>
        <end position="369"/>
    </location>
</feature>
<feature type="turn" evidence="21">
    <location>
        <begin position="375"/>
        <end position="377"/>
    </location>
</feature>
<feature type="strand" evidence="21">
    <location>
        <begin position="380"/>
        <end position="382"/>
    </location>
</feature>
<feature type="turn" evidence="21">
    <location>
        <begin position="385"/>
        <end position="387"/>
    </location>
</feature>
<feature type="strand" evidence="21">
    <location>
        <begin position="399"/>
        <end position="401"/>
    </location>
</feature>
<feature type="helix" evidence="21">
    <location>
        <begin position="403"/>
        <end position="410"/>
    </location>
</feature>
<accession>Q5T4F4</accession>
<accession>B7Z3S0</accession>
<accession>B7Z404</accession>
<accession>B7Z626</accession>
<accession>G8JLC3</accession>
<accession>G8JLF0</accession>
<accession>J3KP98</accession>
<accession>Q5T4F1</accession>
<accession>Q5T4F2</accession>
<accession>Q5T4F3</accession>
<accession>Q8N1K0</accession>
<accession>Q8N6D6</accession>
<accession>Q8NCA0</accession>
<accession>Q8NDE4</accession>
<accession>Q96M08</accession>
<dbReference type="EMBL" id="AK057481">
    <property type="protein sequence ID" value="BAB71506.1"/>
    <property type="molecule type" value="mRNA"/>
</dbReference>
<dbReference type="EMBL" id="AK097945">
    <property type="protein sequence ID" value="BAC05200.1"/>
    <property type="molecule type" value="mRNA"/>
</dbReference>
<dbReference type="EMBL" id="AK074876">
    <property type="protein sequence ID" value="BAC11260.1"/>
    <property type="molecule type" value="mRNA"/>
</dbReference>
<dbReference type="EMBL" id="AK296295">
    <property type="protein sequence ID" value="BAH12306.1"/>
    <property type="molecule type" value="mRNA"/>
</dbReference>
<dbReference type="EMBL" id="AK296588">
    <property type="protein sequence ID" value="BAH12390.1"/>
    <property type="molecule type" value="mRNA"/>
</dbReference>
<dbReference type="EMBL" id="AK299735">
    <property type="protein sequence ID" value="BAH13112.1"/>
    <property type="molecule type" value="mRNA"/>
</dbReference>
<dbReference type="EMBL" id="AL358938">
    <property type="status" value="NOT_ANNOTATED_CDS"/>
    <property type="molecule type" value="Genomic_DNA"/>
</dbReference>
<dbReference type="EMBL" id="BC030621">
    <property type="protein sequence ID" value="AAH30621.2"/>
    <property type="molecule type" value="mRNA"/>
</dbReference>
<dbReference type="EMBL" id="AL834235">
    <property type="protein sequence ID" value="CAD38913.2"/>
    <property type="status" value="ALT_INIT"/>
    <property type="molecule type" value="mRNA"/>
</dbReference>
<dbReference type="CCDS" id="CCDS31262.1">
    <molecule id="Q5T4F4-3"/>
</dbReference>
<dbReference type="CCDS" id="CCDS31263.1">
    <molecule id="Q5T4F4-1"/>
</dbReference>
<dbReference type="CCDS" id="CCDS31264.1">
    <molecule id="Q5T4F4-2"/>
</dbReference>
<dbReference type="CCDS" id="CCDS53562.1">
    <molecule id="Q5T4F4-8"/>
</dbReference>
<dbReference type="CCDS" id="CCDS53563.1">
    <molecule id="Q5T4F4-5"/>
</dbReference>
<dbReference type="CCDS" id="CCDS53564.1">
    <molecule id="Q5T4F4-6"/>
</dbReference>
<dbReference type="CCDS" id="CCDS53565.1">
    <molecule id="Q5T4F4-7"/>
</dbReference>
<dbReference type="RefSeq" id="NP_001002261.1">
    <molecule id="Q5T4F4-3"/>
    <property type="nucleotide sequence ID" value="NM_001002261.4"/>
</dbReference>
<dbReference type="RefSeq" id="NP_001002262.1">
    <molecule id="Q5T4F4-2"/>
    <property type="nucleotide sequence ID" value="NM_001002262.4"/>
</dbReference>
<dbReference type="RefSeq" id="NP_001167590.1">
    <molecule id="Q5T4F4-8"/>
    <property type="nucleotide sequence ID" value="NM_001174119.2"/>
</dbReference>
<dbReference type="RefSeq" id="NP_001167591.1">
    <molecule id="Q5T4F4-5"/>
    <property type="nucleotide sequence ID" value="NM_001174120.2"/>
</dbReference>
<dbReference type="RefSeq" id="NP_001167592.1">
    <molecule id="Q5T4F4-7"/>
    <property type="nucleotide sequence ID" value="NM_001174121.2"/>
</dbReference>
<dbReference type="RefSeq" id="NP_001167593.1">
    <molecule id="Q5T4F4-6"/>
    <property type="nucleotide sequence ID" value="NM_001174122.2"/>
</dbReference>
<dbReference type="RefSeq" id="NP_001372800.1">
    <molecule id="Q5T4F4-3"/>
    <property type="nucleotide sequence ID" value="NM_001385871.1"/>
</dbReference>
<dbReference type="RefSeq" id="NP_001372804.1">
    <molecule id="Q5T4F4-1"/>
    <property type="nucleotide sequence ID" value="NM_001385875.1"/>
</dbReference>
<dbReference type="RefSeq" id="NP_001372809.1">
    <molecule id="Q5T4F4-2"/>
    <property type="nucleotide sequence ID" value="NM_001385880.1"/>
</dbReference>
<dbReference type="RefSeq" id="NP_001372844.1">
    <molecule id="Q5T4F4-7"/>
    <property type="nucleotide sequence ID" value="NM_001385915.1"/>
</dbReference>
<dbReference type="RefSeq" id="NP_653189.3">
    <molecule id="Q5T4F4-1"/>
    <property type="nucleotide sequence ID" value="NM_144588.6"/>
</dbReference>
<dbReference type="RefSeq" id="XP_005269559.1">
    <property type="nucleotide sequence ID" value="XM_005269502.3"/>
</dbReference>
<dbReference type="RefSeq" id="XP_005269560.1">
    <property type="nucleotide sequence ID" value="XM_005269503.3"/>
</dbReference>
<dbReference type="RefSeq" id="XP_005269561.1">
    <property type="nucleotide sequence ID" value="XM_005269504.3"/>
</dbReference>
<dbReference type="RefSeq" id="XP_005269563.1">
    <property type="nucleotide sequence ID" value="XM_005269506.3"/>
</dbReference>
<dbReference type="PDB" id="1X4U">
    <property type="method" value="NMR"/>
    <property type="chains" value="A=341-411"/>
</dbReference>
<dbReference type="PDBsum" id="1X4U"/>
<dbReference type="BMRB" id="Q5T4F4"/>
<dbReference type="SMR" id="Q5T4F4"/>
<dbReference type="BioGRID" id="125623">
    <property type="interactions" value="71"/>
</dbReference>
<dbReference type="CORUM" id="Q5T4F4"/>
<dbReference type="DIP" id="DIP-61530N"/>
<dbReference type="ELM" id="Q5T4F4"/>
<dbReference type="FunCoup" id="Q5T4F4">
    <property type="interactions" value="1554"/>
</dbReference>
<dbReference type="IntAct" id="Q5T4F4">
    <property type="interactions" value="61"/>
</dbReference>
<dbReference type="STRING" id="9606.ENSP00000409594"/>
<dbReference type="TCDB" id="1.R.1.1.1">
    <property type="family name" value="the membrane contact site (mcs) family"/>
</dbReference>
<dbReference type="iPTMnet" id="Q5T4F4"/>
<dbReference type="PhosphoSitePlus" id="Q5T4F4"/>
<dbReference type="BioMuta" id="ZFYVE27"/>
<dbReference type="DMDM" id="74744927"/>
<dbReference type="jPOST" id="Q5T4F4"/>
<dbReference type="MassIVE" id="Q5T4F4"/>
<dbReference type="PaxDb" id="9606-ENSP00000377282"/>
<dbReference type="PeptideAtlas" id="Q5T4F4"/>
<dbReference type="ProteomicsDB" id="34183"/>
<dbReference type="ProteomicsDB" id="34208"/>
<dbReference type="ProteomicsDB" id="64452">
    <molecule id="Q5T4F4-1"/>
</dbReference>
<dbReference type="ProteomicsDB" id="64453">
    <molecule id="Q5T4F4-2"/>
</dbReference>
<dbReference type="ProteomicsDB" id="64454">
    <molecule id="Q5T4F4-3"/>
</dbReference>
<dbReference type="ProteomicsDB" id="64455">
    <molecule id="Q5T4F4-4"/>
</dbReference>
<dbReference type="ProteomicsDB" id="64456">
    <molecule id="Q5T4F4-5"/>
</dbReference>
<dbReference type="Pumba" id="Q5T4F4"/>
<dbReference type="Antibodypedia" id="17359">
    <property type="antibodies" value="182 antibodies from 25 providers"/>
</dbReference>
<dbReference type="DNASU" id="118813"/>
<dbReference type="Ensembl" id="ENST00000337540.11">
    <molecule id="Q5T4F4-8"/>
    <property type="protein sequence ID" value="ENSP00000337993.7"/>
    <property type="gene ID" value="ENSG00000155256.18"/>
</dbReference>
<dbReference type="Ensembl" id="ENST00000357540.8">
    <molecule id="Q5T4F4-5"/>
    <property type="protein sequence ID" value="ENSP00000350148.4"/>
    <property type="gene ID" value="ENSG00000155256.18"/>
</dbReference>
<dbReference type="Ensembl" id="ENST00000359980.5">
    <molecule id="Q5T4F4-2"/>
    <property type="protein sequence ID" value="ENSP00000353069.3"/>
    <property type="gene ID" value="ENSG00000155256.18"/>
</dbReference>
<dbReference type="Ensembl" id="ENST00000370610.7">
    <molecule id="Q5T4F4-7"/>
    <property type="protein sequence ID" value="ENSP00000359642.3"/>
    <property type="gene ID" value="ENSG00000155256.18"/>
</dbReference>
<dbReference type="Ensembl" id="ENST00000370613.7">
    <molecule id="Q5T4F4-6"/>
    <property type="protein sequence ID" value="ENSP00000359646.3"/>
    <property type="gene ID" value="ENSG00000155256.18"/>
</dbReference>
<dbReference type="Ensembl" id="ENST00000393677.8">
    <molecule id="Q5T4F4-1"/>
    <property type="protein sequence ID" value="ENSP00000377282.3"/>
    <property type="gene ID" value="ENSG00000155256.18"/>
</dbReference>
<dbReference type="Ensembl" id="ENST00000423811.3">
    <molecule id="Q5T4F4-3"/>
    <property type="protein sequence ID" value="ENSP00000409594.2"/>
    <property type="gene ID" value="ENSG00000155256.18"/>
</dbReference>
<dbReference type="Ensembl" id="ENST00000684270.1">
    <molecule id="Q5T4F4-1"/>
    <property type="protein sequence ID" value="ENSP00000506975.1"/>
    <property type="gene ID" value="ENSG00000155256.18"/>
</dbReference>
<dbReference type="GeneID" id="118813"/>
<dbReference type="KEGG" id="hsa:118813"/>
<dbReference type="MANE-Select" id="ENST00000684270.1">
    <property type="protein sequence ID" value="ENSP00000506975.1"/>
    <property type="RefSeq nucleotide sequence ID" value="NM_001385875.1"/>
    <property type="RefSeq protein sequence ID" value="NP_001372804.1"/>
</dbReference>
<dbReference type="UCSC" id="uc001kol.3">
    <molecule id="Q5T4F4-1"/>
    <property type="organism name" value="human"/>
</dbReference>
<dbReference type="AGR" id="HGNC:26559"/>
<dbReference type="CTD" id="118813"/>
<dbReference type="DisGeNET" id="118813"/>
<dbReference type="GeneCards" id="ZFYVE27"/>
<dbReference type="HGNC" id="HGNC:26559">
    <property type="gene designation" value="ZFYVE27"/>
</dbReference>
<dbReference type="HPA" id="ENSG00000155256">
    <property type="expression patterns" value="Low tissue specificity"/>
</dbReference>
<dbReference type="MalaCards" id="ZFYVE27"/>
<dbReference type="MIM" id="610243">
    <property type="type" value="gene"/>
</dbReference>
<dbReference type="neXtProt" id="NX_Q5T4F4"/>
<dbReference type="OpenTargets" id="ENSG00000155256"/>
<dbReference type="PharmGKB" id="PA134863310"/>
<dbReference type="VEuPathDB" id="HostDB:ENSG00000155256"/>
<dbReference type="eggNOG" id="ENOG502QVKC">
    <property type="taxonomic scope" value="Eukaryota"/>
</dbReference>
<dbReference type="GeneTree" id="ENSGT00390000013298"/>
<dbReference type="HOGENOM" id="CLU_060341_0_0_1"/>
<dbReference type="InParanoid" id="Q5T4F4"/>
<dbReference type="OMA" id="LYWEDHS"/>
<dbReference type="OrthoDB" id="5975347at2759"/>
<dbReference type="PAN-GO" id="Q5T4F4">
    <property type="GO annotations" value="9 GO annotations based on evolutionary models"/>
</dbReference>
<dbReference type="PhylomeDB" id="Q5T4F4"/>
<dbReference type="TreeFam" id="TF331044"/>
<dbReference type="PathwayCommons" id="Q5T4F4"/>
<dbReference type="SignaLink" id="Q5T4F4"/>
<dbReference type="BioGRID-ORCS" id="118813">
    <property type="hits" value="18 hits in 1157 CRISPR screens"/>
</dbReference>
<dbReference type="ChiTaRS" id="ZFYVE27">
    <property type="organism name" value="human"/>
</dbReference>
<dbReference type="EvolutionaryTrace" id="Q5T4F4"/>
<dbReference type="GenomeRNAi" id="118813"/>
<dbReference type="Pharos" id="Q5T4F4">
    <property type="development level" value="Tbio"/>
</dbReference>
<dbReference type="PRO" id="PR:Q5T4F4"/>
<dbReference type="Proteomes" id="UP000005640">
    <property type="component" value="Chromosome 10"/>
</dbReference>
<dbReference type="RNAct" id="Q5T4F4">
    <property type="molecule type" value="protein"/>
</dbReference>
<dbReference type="Bgee" id="ENSG00000155256">
    <property type="expression patterns" value="Expressed in pancreatic ductal cell and 143 other cell types or tissues"/>
</dbReference>
<dbReference type="GO" id="GO:0030424">
    <property type="term" value="C:axon"/>
    <property type="evidence" value="ECO:0000250"/>
    <property type="project" value="UniProtKB"/>
</dbReference>
<dbReference type="GO" id="GO:0005829">
    <property type="term" value="C:cytosol"/>
    <property type="evidence" value="ECO:0000314"/>
    <property type="project" value="HPA"/>
</dbReference>
<dbReference type="GO" id="GO:0030425">
    <property type="term" value="C:dendrite"/>
    <property type="evidence" value="ECO:0000250"/>
    <property type="project" value="UniProtKB"/>
</dbReference>
<dbReference type="GO" id="GO:0005783">
    <property type="term" value="C:endoplasmic reticulum"/>
    <property type="evidence" value="ECO:0000314"/>
    <property type="project" value="UniProtKB"/>
</dbReference>
<dbReference type="GO" id="GO:0005789">
    <property type="term" value="C:endoplasmic reticulum membrane"/>
    <property type="evidence" value="ECO:0000314"/>
    <property type="project" value="UniProtKB"/>
</dbReference>
<dbReference type="GO" id="GO:0071782">
    <property type="term" value="C:endoplasmic reticulum tubular network"/>
    <property type="evidence" value="ECO:0000314"/>
    <property type="project" value="UniProtKB"/>
</dbReference>
<dbReference type="GO" id="GO:0032584">
    <property type="term" value="C:growth cone membrane"/>
    <property type="evidence" value="ECO:0000250"/>
    <property type="project" value="UniProtKB"/>
</dbReference>
<dbReference type="GO" id="GO:0043231">
    <property type="term" value="C:intracellular membrane-bounded organelle"/>
    <property type="evidence" value="ECO:0000314"/>
    <property type="project" value="HPA"/>
</dbReference>
<dbReference type="GO" id="GO:0005654">
    <property type="term" value="C:nucleoplasm"/>
    <property type="evidence" value="ECO:0000314"/>
    <property type="project" value="HPA"/>
</dbReference>
<dbReference type="GO" id="GO:0055038">
    <property type="term" value="C:recycling endosome membrane"/>
    <property type="evidence" value="ECO:0000250"/>
    <property type="project" value="UniProtKB"/>
</dbReference>
<dbReference type="GO" id="GO:0042802">
    <property type="term" value="F:identical protein binding"/>
    <property type="evidence" value="ECO:0000353"/>
    <property type="project" value="IntAct"/>
</dbReference>
<dbReference type="GO" id="GO:0008270">
    <property type="term" value="F:zinc ion binding"/>
    <property type="evidence" value="ECO:0007669"/>
    <property type="project" value="UniProtKB-KW"/>
</dbReference>
<dbReference type="GO" id="GO:0071787">
    <property type="term" value="P:endoplasmic reticulum tubular network formation"/>
    <property type="evidence" value="ECO:0000315"/>
    <property type="project" value="UniProtKB"/>
</dbReference>
<dbReference type="GO" id="GO:0031175">
    <property type="term" value="P:neuron projection development"/>
    <property type="evidence" value="ECO:0000314"/>
    <property type="project" value="UniProtKB"/>
</dbReference>
<dbReference type="GO" id="GO:0048011">
    <property type="term" value="P:neurotrophin TRK receptor signaling pathway"/>
    <property type="evidence" value="ECO:0000250"/>
    <property type="project" value="UniProtKB"/>
</dbReference>
<dbReference type="GO" id="GO:0045773">
    <property type="term" value="P:positive regulation of axon extension"/>
    <property type="evidence" value="ECO:0000250"/>
    <property type="project" value="UniProtKB"/>
</dbReference>
<dbReference type="GO" id="GO:0072659">
    <property type="term" value="P:protein localization to plasma membrane"/>
    <property type="evidence" value="ECO:0000250"/>
    <property type="project" value="UniProtKB"/>
</dbReference>
<dbReference type="GO" id="GO:0016192">
    <property type="term" value="P:vesicle-mediated transport"/>
    <property type="evidence" value="ECO:0000314"/>
    <property type="project" value="UniProtKB"/>
</dbReference>
<dbReference type="CDD" id="cd15723">
    <property type="entry name" value="FYVE_protrudin"/>
    <property type="match status" value="1"/>
</dbReference>
<dbReference type="FunFam" id="3.30.40.10:FF:000102">
    <property type="entry name" value="protrudin isoform X2"/>
    <property type="match status" value="1"/>
</dbReference>
<dbReference type="Gene3D" id="3.30.40.10">
    <property type="entry name" value="Zinc/RING finger domain, C3HC4 (zinc finger)"/>
    <property type="match status" value="1"/>
</dbReference>
<dbReference type="InterPro" id="IPR042405">
    <property type="entry name" value="Protrudin"/>
</dbReference>
<dbReference type="InterPro" id="IPR000306">
    <property type="entry name" value="Znf_FYVE"/>
</dbReference>
<dbReference type="InterPro" id="IPR017455">
    <property type="entry name" value="Znf_FYVE-rel"/>
</dbReference>
<dbReference type="InterPro" id="IPR011011">
    <property type="entry name" value="Znf_FYVE_PHD"/>
</dbReference>
<dbReference type="InterPro" id="IPR013083">
    <property type="entry name" value="Znf_RING/FYVE/PHD"/>
</dbReference>
<dbReference type="PANTHER" id="PTHR14543">
    <property type="entry name" value="PROTRUDIN"/>
    <property type="match status" value="1"/>
</dbReference>
<dbReference type="PANTHER" id="PTHR14543:SF1">
    <property type="entry name" value="PROTRUDIN"/>
    <property type="match status" value="1"/>
</dbReference>
<dbReference type="Pfam" id="PF01363">
    <property type="entry name" value="FYVE"/>
    <property type="match status" value="1"/>
</dbReference>
<dbReference type="SMART" id="SM00064">
    <property type="entry name" value="FYVE"/>
    <property type="match status" value="1"/>
</dbReference>
<dbReference type="SUPFAM" id="SSF57903">
    <property type="entry name" value="FYVE/PHD zinc finger"/>
    <property type="match status" value="1"/>
</dbReference>
<dbReference type="PROSITE" id="PS50178">
    <property type="entry name" value="ZF_FYVE"/>
    <property type="match status" value="1"/>
</dbReference>
<gene>
    <name type="primary">ZFYVE27</name>
    <name evidence="19" type="synonym">SPG33</name>
</gene>
<name>ZFY27_HUMAN</name>
<proteinExistence type="evidence at protein level"/>
<organism>
    <name type="scientific">Homo sapiens</name>
    <name type="common">Human</name>
    <dbReference type="NCBI Taxonomy" id="9606"/>
    <lineage>
        <taxon>Eukaryota</taxon>
        <taxon>Metazoa</taxon>
        <taxon>Chordata</taxon>
        <taxon>Craniata</taxon>
        <taxon>Vertebrata</taxon>
        <taxon>Euteleostomi</taxon>
        <taxon>Mammalia</taxon>
        <taxon>Eutheria</taxon>
        <taxon>Euarchontoglires</taxon>
        <taxon>Primates</taxon>
        <taxon>Haplorrhini</taxon>
        <taxon>Catarrhini</taxon>
        <taxon>Hominidae</taxon>
        <taxon>Homo</taxon>
    </lineage>
</organism>
<reference key="1">
    <citation type="journal article" date="2004" name="Nat. Genet.">
        <title>Complete sequencing and characterization of 21,243 full-length human cDNAs.</title>
        <authorList>
            <person name="Ota T."/>
            <person name="Suzuki Y."/>
            <person name="Nishikawa T."/>
            <person name="Otsuki T."/>
            <person name="Sugiyama T."/>
            <person name="Irie R."/>
            <person name="Wakamatsu A."/>
            <person name="Hayashi K."/>
            <person name="Sato H."/>
            <person name="Nagai K."/>
            <person name="Kimura K."/>
            <person name="Makita H."/>
            <person name="Sekine M."/>
            <person name="Obayashi M."/>
            <person name="Nishi T."/>
            <person name="Shibahara T."/>
            <person name="Tanaka T."/>
            <person name="Ishii S."/>
            <person name="Yamamoto J."/>
            <person name="Saito K."/>
            <person name="Kawai Y."/>
            <person name="Isono Y."/>
            <person name="Nakamura Y."/>
            <person name="Nagahari K."/>
            <person name="Murakami K."/>
            <person name="Yasuda T."/>
            <person name="Iwayanagi T."/>
            <person name="Wagatsuma M."/>
            <person name="Shiratori A."/>
            <person name="Sudo H."/>
            <person name="Hosoiri T."/>
            <person name="Kaku Y."/>
            <person name="Kodaira H."/>
            <person name="Kondo H."/>
            <person name="Sugawara M."/>
            <person name="Takahashi M."/>
            <person name="Kanda K."/>
            <person name="Yokoi T."/>
            <person name="Furuya T."/>
            <person name="Kikkawa E."/>
            <person name="Omura Y."/>
            <person name="Abe K."/>
            <person name="Kamihara K."/>
            <person name="Katsuta N."/>
            <person name="Sato K."/>
            <person name="Tanikawa M."/>
            <person name="Yamazaki M."/>
            <person name="Ninomiya K."/>
            <person name="Ishibashi T."/>
            <person name="Yamashita H."/>
            <person name="Murakawa K."/>
            <person name="Fujimori K."/>
            <person name="Tanai H."/>
            <person name="Kimata M."/>
            <person name="Watanabe M."/>
            <person name="Hiraoka S."/>
            <person name="Chiba Y."/>
            <person name="Ishida S."/>
            <person name="Ono Y."/>
            <person name="Takiguchi S."/>
            <person name="Watanabe S."/>
            <person name="Yosida M."/>
            <person name="Hotuta T."/>
            <person name="Kusano J."/>
            <person name="Kanehori K."/>
            <person name="Takahashi-Fujii A."/>
            <person name="Hara H."/>
            <person name="Tanase T.-O."/>
            <person name="Nomura Y."/>
            <person name="Togiya S."/>
            <person name="Komai F."/>
            <person name="Hara R."/>
            <person name="Takeuchi K."/>
            <person name="Arita M."/>
            <person name="Imose N."/>
            <person name="Musashino K."/>
            <person name="Yuuki H."/>
            <person name="Oshima A."/>
            <person name="Sasaki N."/>
            <person name="Aotsuka S."/>
            <person name="Yoshikawa Y."/>
            <person name="Matsunawa H."/>
            <person name="Ichihara T."/>
            <person name="Shiohata N."/>
            <person name="Sano S."/>
            <person name="Moriya S."/>
            <person name="Momiyama H."/>
            <person name="Satoh N."/>
            <person name="Takami S."/>
            <person name="Terashima Y."/>
            <person name="Suzuki O."/>
            <person name="Nakagawa S."/>
            <person name="Senoh A."/>
            <person name="Mizoguchi H."/>
            <person name="Goto Y."/>
            <person name="Shimizu F."/>
            <person name="Wakebe H."/>
            <person name="Hishigaki H."/>
            <person name="Watanabe T."/>
            <person name="Sugiyama A."/>
            <person name="Takemoto M."/>
            <person name="Kawakami B."/>
            <person name="Yamazaki M."/>
            <person name="Watanabe K."/>
            <person name="Kumagai A."/>
            <person name="Itakura S."/>
            <person name="Fukuzumi Y."/>
            <person name="Fujimori Y."/>
            <person name="Komiyama M."/>
            <person name="Tashiro H."/>
            <person name="Tanigami A."/>
            <person name="Fujiwara T."/>
            <person name="Ono T."/>
            <person name="Yamada K."/>
            <person name="Fujii Y."/>
            <person name="Ozaki K."/>
            <person name="Hirao M."/>
            <person name="Ohmori Y."/>
            <person name="Kawabata A."/>
            <person name="Hikiji T."/>
            <person name="Kobatake N."/>
            <person name="Inagaki H."/>
            <person name="Ikema Y."/>
            <person name="Okamoto S."/>
            <person name="Okitani R."/>
            <person name="Kawakami T."/>
            <person name="Noguchi S."/>
            <person name="Itoh T."/>
            <person name="Shigeta K."/>
            <person name="Senba T."/>
            <person name="Matsumura K."/>
            <person name="Nakajima Y."/>
            <person name="Mizuno T."/>
            <person name="Morinaga M."/>
            <person name="Sasaki M."/>
            <person name="Togashi T."/>
            <person name="Oyama M."/>
            <person name="Hata H."/>
            <person name="Watanabe M."/>
            <person name="Komatsu T."/>
            <person name="Mizushima-Sugano J."/>
            <person name="Satoh T."/>
            <person name="Shirai Y."/>
            <person name="Takahashi Y."/>
            <person name="Nakagawa K."/>
            <person name="Okumura K."/>
            <person name="Nagase T."/>
            <person name="Nomura N."/>
            <person name="Kikuchi H."/>
            <person name="Masuho Y."/>
            <person name="Yamashita R."/>
            <person name="Nakai K."/>
            <person name="Yada T."/>
            <person name="Nakamura Y."/>
            <person name="Ohara O."/>
            <person name="Isogai T."/>
            <person name="Sugano S."/>
        </authorList>
    </citation>
    <scope>NUCLEOTIDE SEQUENCE [LARGE SCALE MRNA] (ISOFORMS 2; 4; 5; 6; 7 AND 8)</scope>
    <scope>VARIANT VAL-138</scope>
    <source>
        <tissue>Brain</tissue>
        <tissue>Testis</tissue>
        <tissue>Thalamus</tissue>
        <tissue>Thymus</tissue>
    </source>
</reference>
<reference key="2">
    <citation type="journal article" date="2004" name="Nature">
        <title>The DNA sequence and comparative analysis of human chromosome 10.</title>
        <authorList>
            <person name="Deloukas P."/>
            <person name="Earthrowl M.E."/>
            <person name="Grafham D.V."/>
            <person name="Rubenfield M."/>
            <person name="French L."/>
            <person name="Steward C.A."/>
            <person name="Sims S.K."/>
            <person name="Jones M.C."/>
            <person name="Searle S."/>
            <person name="Scott C."/>
            <person name="Howe K."/>
            <person name="Hunt S.E."/>
            <person name="Andrews T.D."/>
            <person name="Gilbert J.G.R."/>
            <person name="Swarbreck D."/>
            <person name="Ashurst J.L."/>
            <person name="Taylor A."/>
            <person name="Battles J."/>
            <person name="Bird C.P."/>
            <person name="Ainscough R."/>
            <person name="Almeida J.P."/>
            <person name="Ashwell R.I.S."/>
            <person name="Ambrose K.D."/>
            <person name="Babbage A.K."/>
            <person name="Bagguley C.L."/>
            <person name="Bailey J."/>
            <person name="Banerjee R."/>
            <person name="Bates K."/>
            <person name="Beasley H."/>
            <person name="Bray-Allen S."/>
            <person name="Brown A.J."/>
            <person name="Brown J.Y."/>
            <person name="Burford D.C."/>
            <person name="Burrill W."/>
            <person name="Burton J."/>
            <person name="Cahill P."/>
            <person name="Camire D."/>
            <person name="Carter N.P."/>
            <person name="Chapman J.C."/>
            <person name="Clark S.Y."/>
            <person name="Clarke G."/>
            <person name="Clee C.M."/>
            <person name="Clegg S."/>
            <person name="Corby N."/>
            <person name="Coulson A."/>
            <person name="Dhami P."/>
            <person name="Dutta I."/>
            <person name="Dunn M."/>
            <person name="Faulkner L."/>
            <person name="Frankish A."/>
            <person name="Frankland J.A."/>
            <person name="Garner P."/>
            <person name="Garnett J."/>
            <person name="Gribble S."/>
            <person name="Griffiths C."/>
            <person name="Grocock R."/>
            <person name="Gustafson E."/>
            <person name="Hammond S."/>
            <person name="Harley J.L."/>
            <person name="Hart E."/>
            <person name="Heath P.D."/>
            <person name="Ho T.P."/>
            <person name="Hopkins B."/>
            <person name="Horne J."/>
            <person name="Howden P.J."/>
            <person name="Huckle E."/>
            <person name="Hynds C."/>
            <person name="Johnson C."/>
            <person name="Johnson D."/>
            <person name="Kana A."/>
            <person name="Kay M."/>
            <person name="Kimberley A.M."/>
            <person name="Kershaw J.K."/>
            <person name="Kokkinaki M."/>
            <person name="Laird G.K."/>
            <person name="Lawlor S."/>
            <person name="Lee H.M."/>
            <person name="Leongamornlert D.A."/>
            <person name="Laird G."/>
            <person name="Lloyd C."/>
            <person name="Lloyd D.M."/>
            <person name="Loveland J."/>
            <person name="Lovell J."/>
            <person name="McLaren S."/>
            <person name="McLay K.E."/>
            <person name="McMurray A."/>
            <person name="Mashreghi-Mohammadi M."/>
            <person name="Matthews L."/>
            <person name="Milne S."/>
            <person name="Nickerson T."/>
            <person name="Nguyen M."/>
            <person name="Overton-Larty E."/>
            <person name="Palmer S.A."/>
            <person name="Pearce A.V."/>
            <person name="Peck A.I."/>
            <person name="Pelan S."/>
            <person name="Phillimore B."/>
            <person name="Porter K."/>
            <person name="Rice C.M."/>
            <person name="Rogosin A."/>
            <person name="Ross M.T."/>
            <person name="Sarafidou T."/>
            <person name="Sehra H.K."/>
            <person name="Shownkeen R."/>
            <person name="Skuce C.D."/>
            <person name="Smith M."/>
            <person name="Standring L."/>
            <person name="Sycamore N."/>
            <person name="Tester J."/>
            <person name="Thorpe A."/>
            <person name="Torcasso W."/>
            <person name="Tracey A."/>
            <person name="Tromans A."/>
            <person name="Tsolas J."/>
            <person name="Wall M."/>
            <person name="Walsh J."/>
            <person name="Wang H."/>
            <person name="Weinstock K."/>
            <person name="West A.P."/>
            <person name="Willey D.L."/>
            <person name="Whitehead S.L."/>
            <person name="Wilming L."/>
            <person name="Wray P.W."/>
            <person name="Young L."/>
            <person name="Chen Y."/>
            <person name="Lovering R.C."/>
            <person name="Moschonas N.K."/>
            <person name="Siebert R."/>
            <person name="Fechtel K."/>
            <person name="Bentley D."/>
            <person name="Durbin R.M."/>
            <person name="Hubbard T."/>
            <person name="Doucette-Stamm L."/>
            <person name="Beck S."/>
            <person name="Smith D.R."/>
            <person name="Rogers J."/>
        </authorList>
    </citation>
    <scope>NUCLEOTIDE SEQUENCE [LARGE SCALE GENOMIC DNA]</scope>
</reference>
<reference key="3">
    <citation type="journal article" date="2004" name="Genome Res.">
        <title>The status, quality, and expansion of the NIH full-length cDNA project: the Mammalian Gene Collection (MGC).</title>
        <authorList>
            <consortium name="The MGC Project Team"/>
        </authorList>
    </citation>
    <scope>NUCLEOTIDE SEQUENCE [LARGE SCALE MRNA] (ISOFORM 1)</scope>
    <scope>VARIANT VAL-138</scope>
    <source>
        <tissue>Brain</tissue>
    </source>
</reference>
<reference key="4">
    <citation type="journal article" date="2007" name="BMC Genomics">
        <title>The full-ORF clone resource of the German cDNA consortium.</title>
        <authorList>
            <person name="Bechtel S."/>
            <person name="Rosenfelder H."/>
            <person name="Duda A."/>
            <person name="Schmidt C.P."/>
            <person name="Ernst U."/>
            <person name="Wellenreuther R."/>
            <person name="Mehrle A."/>
            <person name="Schuster C."/>
            <person name="Bahr A."/>
            <person name="Bloecker H."/>
            <person name="Heubner D."/>
            <person name="Hoerlein A."/>
            <person name="Michel G."/>
            <person name="Wedler H."/>
            <person name="Koehrer K."/>
            <person name="Ottenwaelder B."/>
            <person name="Poustka A."/>
            <person name="Wiemann S."/>
            <person name="Schupp I."/>
        </authorList>
    </citation>
    <scope>NUCLEOTIDE SEQUENCE [LARGE SCALE MRNA] OF 23-411 (ISOFORM 3)</scope>
    <scope>VARIANT VAL-138</scope>
    <source>
        <tissue>Brain</tissue>
    </source>
</reference>
<reference key="5">
    <citation type="journal article" date="2006" name="Science">
        <title>Protrudin induces neurite formation by directional membrane trafficking.</title>
        <authorList>
            <person name="Shirane M."/>
            <person name="Nakayama K.I."/>
        </authorList>
    </citation>
    <scope>FUNCTION</scope>
    <scope>INTERACTION WITH FKBP8 AND RAB11A</scope>
    <scope>PHOSPHORYLATION</scope>
    <scope>MUTAGENESIS OF LEU-13 AND ILE-49</scope>
</reference>
<reference key="6">
    <citation type="journal article" date="2008" name="Genes Cells">
        <title>Regulation of apoptosis and neurite extension by FKBP38 is required for neural tube formation in the mouse.</title>
        <authorList>
            <person name="Shirane M."/>
            <person name="Ogawa M."/>
            <person name="Motoyama J."/>
            <person name="Nakayama K.I."/>
        </authorList>
    </citation>
    <scope>INTERACTION WITH FKBP8</scope>
</reference>
<reference key="7">
    <citation type="journal article" date="2009" name="J. Biol. Chem.">
        <title>Promotion of neurite extension by protrudin requires its interaction with vesicle-associated membrane protein-associated protein.</title>
        <authorList>
            <person name="Saita S."/>
            <person name="Shirane M."/>
            <person name="Natume T."/>
            <person name="Iemura S."/>
            <person name="Nakayama K.I."/>
        </authorList>
    </citation>
    <scope>FUNCTION</scope>
    <scope>INTERACTION WITH VAPA AND VAPB</scope>
    <scope>MUTAGENESIS OF ASP-289</scope>
    <scope>SUBCELLULAR LOCATION</scope>
</reference>
<reference key="8">
    <citation type="journal article" date="2011" name="Mol. Biol. Cell">
        <title>Protrudin serves as an adaptor molecule that connects KIF5 and its cargoes in vesicular transport during process formation.</title>
        <authorList>
            <person name="Matsuzaki F."/>
            <person name="Shirane M."/>
            <person name="Matsumoto M."/>
            <person name="Nakayama K.I."/>
        </authorList>
    </citation>
    <scope>FUNCTION</scope>
    <scope>INTERACTION WITH KIF5A; VAPA; VAPB AND RTN3</scope>
</reference>
<reference key="9">
    <citation type="submission" date="2005-11" db="PDB data bank">
        <title>Solution structure of the FYVE domain from human FYVE domain containing 27 isoform B protein.</title>
        <authorList>
            <consortium name="RIKEN structural genomics initiative (RSGI)"/>
        </authorList>
    </citation>
    <scope>STRUCTURE BY NMR OF 341-411</scope>
</reference>
<reference key="10">
    <citation type="journal article" date="2006" name="Am. J. Hum. Genet.">
        <title>ZFYVE27 (SPG33), a novel spastin-binding protein, is mutated in hereditary spastic paraplegia.</title>
        <authorList>
            <person name="Mannan A.U."/>
            <person name="Krawen P."/>
            <person name="Sauter S.M."/>
            <person name="Boehm J."/>
            <person name="Chronowska A."/>
            <person name="Paulus W."/>
            <person name="Neesen J."/>
            <person name="Engel W."/>
        </authorList>
    </citation>
    <scope>VARIANT VAL-191</scope>
    <scope>CHARACTERIZATION OF VARIANT VAL-191</scope>
    <scope>SUBCELLULAR LOCATION</scope>
    <scope>INTERACTION WITH SPAST</scope>
</reference>
<reference key="11">
    <citation type="journal article" date="2008" name="Am. J. Hum. Genet.">
        <title>The role of ZFYVE27/protrudin in hereditary spastic paraplegia.</title>
        <authorList>
            <person name="Martignoni M."/>
            <person name="Riano E."/>
            <person name="Rugarli E.I."/>
        </authorList>
    </citation>
    <scope>CHARACTERIZATION OF VARIANT VAL-191</scope>
</reference>
<reference key="12">
    <citation type="journal article" date="2013" name="Proc. Natl. Acad. Sci. U.S.A.">
        <title>Protrudin binds atlastins and endoplasmic reticulum-shaping proteins and regulates network formation.</title>
        <authorList>
            <person name="Chang J."/>
            <person name="Lee S."/>
            <person name="Blackstone C."/>
        </authorList>
    </citation>
    <scope>CHARACTERIZATION OF VARIANT VAL-191</scope>
    <scope>FUNCTION</scope>
    <scope>SUBUNIT</scope>
    <scope>SUBCELLULAR LOCATION</scope>
    <scope>TOPOLOGY</scope>
    <scope>INTERACTION WITH REEP1; REEP5; ATL1; ATL2; ATL3 AND SPAST</scope>
</reference>
<reference key="13">
    <citation type="journal article" date="2014" name="J. Biol. Chem.">
        <title>Protrudin regulates endoplasmic reticulum morphology and function associated with the pathogenesis of hereditary spastic paraplegia.</title>
        <authorList>
            <person name="Hashimoto Y."/>
            <person name="Shirane M."/>
            <person name="Matsuzaki F."/>
            <person name="Saita S."/>
            <person name="Ohnishi T."/>
            <person name="Nakayama K.I."/>
        </authorList>
    </citation>
    <scope>CHARACTERIZATION OF VARIANT VAL-191</scope>
    <scope>FUNCTION</scope>
    <scope>SUBCELLULAR LOCATION</scope>
    <scope>INTERACTION WITH REEP1; REEP5 AND ATL1</scope>
</reference>
<evidence type="ECO:0000250" key="1">
    <source>
        <dbReference type="UniProtKB" id="Q3TXX3"/>
    </source>
</evidence>
<evidence type="ECO:0000250" key="2">
    <source>
        <dbReference type="UniProtKB" id="Q6P7B7"/>
    </source>
</evidence>
<evidence type="ECO:0000255" key="3"/>
<evidence type="ECO:0000255" key="4">
    <source>
        <dbReference type="PROSITE-ProRule" id="PRU00091"/>
    </source>
</evidence>
<evidence type="ECO:0000256" key="5">
    <source>
        <dbReference type="SAM" id="MobiDB-lite"/>
    </source>
</evidence>
<evidence type="ECO:0000269" key="6">
    <source>
    </source>
</evidence>
<evidence type="ECO:0000269" key="7">
    <source>
    </source>
</evidence>
<evidence type="ECO:0000269" key="8">
    <source>
    </source>
</evidence>
<evidence type="ECO:0000269" key="9">
    <source>
    </source>
</evidence>
<evidence type="ECO:0000269" key="10">
    <source>
    </source>
</evidence>
<evidence type="ECO:0000269" key="11">
    <source>
    </source>
</evidence>
<evidence type="ECO:0000269" key="12">
    <source>
    </source>
</evidence>
<evidence type="ECO:0000269" key="13">
    <source>
    </source>
</evidence>
<evidence type="ECO:0000269" key="14">
    <source>
    </source>
</evidence>
<evidence type="ECO:0000269" key="15">
    <source>
    </source>
</evidence>
<evidence type="ECO:0000269" key="16">
    <source>
    </source>
</evidence>
<evidence type="ECO:0000303" key="17">
    <source>
    </source>
</evidence>
<evidence type="ECO:0000303" key="18">
    <source>
    </source>
</evidence>
<evidence type="ECO:0000303" key="19">
    <source>
    </source>
</evidence>
<evidence type="ECO:0000305" key="20"/>
<evidence type="ECO:0007829" key="21">
    <source>
        <dbReference type="PDB" id="1X4U"/>
    </source>
</evidence>
<keyword id="KW-0002">3D-structure</keyword>
<keyword id="KW-0025">Alternative splicing</keyword>
<keyword id="KW-1003">Cell membrane</keyword>
<keyword id="KW-0966">Cell projection</keyword>
<keyword id="KW-0225">Disease variant</keyword>
<keyword id="KW-0256">Endoplasmic reticulum</keyword>
<keyword id="KW-0967">Endosome</keyword>
<keyword id="KW-0890">Hereditary spastic paraplegia</keyword>
<keyword id="KW-0472">Membrane</keyword>
<keyword id="KW-0479">Metal-binding</keyword>
<keyword id="KW-0523">Neurodegeneration</keyword>
<keyword id="KW-0597">Phosphoprotein</keyword>
<keyword id="KW-1267">Proteomics identification</keyword>
<keyword id="KW-1185">Reference proteome</keyword>
<keyword id="KW-0812">Transmembrane</keyword>
<keyword id="KW-1133">Transmembrane helix</keyword>
<keyword id="KW-0862">Zinc</keyword>
<keyword id="KW-0863">Zinc-finger</keyword>
<sequence>MQTSEREGSGPELSPSVMPEAPLESPPFPTKSPAFDLFNLVLSYKRLEIYLEPLKDAGDGVRYLLRWQMPLCSLLTCLGLNVLFLTLNEGAWYSVGALMISVPALLGYLQEVCRARLPDSELMRRKYHSVRQEDLQRGRLSRPEAVAEVKSFLIQLEAFLSRLCCTCEAAYRVLHWENPVVSSQFYGALLGTVCMLYLLPLCWVLTLLNSTLFLGNVEFFRVVSEYRASLQQRMNPKQEEHAFESPPPPDVGGKDGLMDSTPALTPTEDLTPGSVEEAEEAEPDEEFKDAIEETHLVVLEDDEGAPCPAEDELALQDNGFLSKNEVLRSKVSRLTERLRKRYPTNNFGNCTGCSATFSVLKKRRSCSNCGNSFCSRCCSFKVPKSSMGATAPEAQRETVFVCASCNQTLSK</sequence>